<feature type="chain" id="PRO_0000239269" description="Developmental pluripotency-associated protein 4">
    <location>
        <begin position="1"/>
        <end position="296"/>
    </location>
</feature>
<feature type="region of interest" description="Disordered" evidence="2">
    <location>
        <begin position="1"/>
        <end position="73"/>
    </location>
</feature>
<feature type="compositionally biased region" description="Basic and acidic residues" evidence="2">
    <location>
        <begin position="1"/>
        <end position="13"/>
    </location>
</feature>
<feature type="compositionally biased region" description="Low complexity" evidence="2">
    <location>
        <begin position="23"/>
        <end position="34"/>
    </location>
</feature>
<feature type="compositionally biased region" description="Basic and acidic residues" evidence="2">
    <location>
        <begin position="42"/>
        <end position="58"/>
    </location>
</feature>
<feature type="sequence conflict" description="In Ref. 3; AAH64754." evidence="6" ref="3">
    <original>S</original>
    <variation>G</variation>
    <location>
        <position position="27"/>
    </location>
</feature>
<feature type="sequence conflict" description="In Ref. 3; AAH64754." evidence="6" ref="3">
    <original>K</original>
    <variation>R</variation>
    <location>
        <position position="55"/>
    </location>
</feature>
<feature type="sequence conflict" description="In Ref. 1; AAO84506." evidence="6" ref="1">
    <original>S</original>
    <variation>R</variation>
    <location>
        <position position="99"/>
    </location>
</feature>
<feature type="sequence conflict" description="In Ref. 1; AAO84506." evidence="6" ref="1">
    <original>M</original>
    <variation>L</variation>
    <location>
        <position position="120"/>
    </location>
</feature>
<feature type="sequence conflict" description="In Ref. 1; AAO84506." evidence="6" ref="1">
    <original>D</original>
    <variation>Y</variation>
    <location>
        <position position="128"/>
    </location>
</feature>
<feature type="sequence conflict" description="In Ref. 1; AAO84506." evidence="6" ref="1">
    <original>M</original>
    <variation>L</variation>
    <location>
        <position position="142"/>
    </location>
</feature>
<feature type="sequence conflict" description="In Ref. 2; BAC28194." evidence="6" ref="2">
    <original>E</original>
    <variation>K</variation>
    <location>
        <position position="295"/>
    </location>
</feature>
<proteinExistence type="evidence at protein level"/>
<gene>
    <name type="primary">Dppa4</name>
</gene>
<organism>
    <name type="scientific">Mus musculus</name>
    <name type="common">Mouse</name>
    <dbReference type="NCBI Taxonomy" id="10090"/>
    <lineage>
        <taxon>Eukaryota</taxon>
        <taxon>Metazoa</taxon>
        <taxon>Chordata</taxon>
        <taxon>Craniata</taxon>
        <taxon>Vertebrata</taxon>
        <taxon>Euteleostomi</taxon>
        <taxon>Mammalia</taxon>
        <taxon>Eutheria</taxon>
        <taxon>Euarchontoglires</taxon>
        <taxon>Glires</taxon>
        <taxon>Rodentia</taxon>
        <taxon>Myomorpha</taxon>
        <taxon>Muroidea</taxon>
        <taxon>Muridae</taxon>
        <taxon>Murinae</taxon>
        <taxon>Mus</taxon>
        <taxon>Mus</taxon>
    </lineage>
</organism>
<comment type="function">
    <text evidence="4 5">May be involved in the maintenance of active epigenetic status of target genes. May inhibit differentiation of embryonic stem (ES) cells into a primitive ectoderm lineage.</text>
</comment>
<comment type="subunit">
    <text evidence="1 5">Interacts with DPPA2 (PubMed:21896782). Interacts with PCGF1 (By similarity).</text>
</comment>
<comment type="subcellular location">
    <subcellularLocation>
        <location evidence="4 5">Nucleus</location>
    </subcellularLocation>
    <text>Associated with transcriptionally active chromatin.</text>
</comment>
<comment type="tissue specificity">
    <text evidence="3 4 5">Expressed in pluripotent embryonic cells, but not in differentiated somatic tissues.</text>
</comment>
<comment type="developmental stage">
    <text evidence="3 4 5">Expressed in 4-cell embryo, morula and blastocyst. At 7.5 dpc, detected in the epiblast. At 10.0 dpc, expressed in the primordial germ cells and at 12.0 dpc in the embryonic gonads. At 14.5 dpc, expression is restricted to testis. 6 days after birth, still detected in primitive type A spermatogonia. Expressed in undifferentiated embryonic stem cells, but expression decreases upon differentiation (at protein level).</text>
</comment>
<comment type="disruption phenotype">
    <text evidence="5">The mortality of mutant animals is increased at birth and most die within 3 days. The few surviving neonates show growth retardation, but they catch up with wild-type mice by 20 weeks of age.</text>
</comment>
<protein>
    <recommendedName>
        <fullName>Developmental pluripotency-associated protein 4</fullName>
    </recommendedName>
    <alternativeName>
        <fullName>Embryonic stem cell-associated transcript 15-1 protein</fullName>
        <shortName>ECAT15-1</shortName>
    </alternativeName>
</protein>
<evidence type="ECO:0000250" key="1">
    <source>
        <dbReference type="UniProtKB" id="Q7L190"/>
    </source>
</evidence>
<evidence type="ECO:0000256" key="2">
    <source>
        <dbReference type="SAM" id="MobiDB-lite"/>
    </source>
</evidence>
<evidence type="ECO:0000269" key="3">
    <source>
    </source>
</evidence>
<evidence type="ECO:0000269" key="4">
    <source>
    </source>
</evidence>
<evidence type="ECO:0000269" key="5">
    <source>
    </source>
</evidence>
<evidence type="ECO:0000305" key="6"/>
<dbReference type="EMBL" id="AF490348">
    <property type="protein sequence ID" value="AAO84506.1"/>
    <property type="molecule type" value="mRNA"/>
</dbReference>
<dbReference type="EMBL" id="AK033197">
    <property type="protein sequence ID" value="BAC28194.1"/>
    <property type="molecule type" value="mRNA"/>
</dbReference>
<dbReference type="EMBL" id="BC064754">
    <property type="protein sequence ID" value="AAH64754.1"/>
    <property type="molecule type" value="mRNA"/>
</dbReference>
<dbReference type="CCDS" id="CCDS28209.1"/>
<dbReference type="RefSeq" id="NP_001018002.1">
    <property type="nucleotide sequence ID" value="NM_001018002.1"/>
</dbReference>
<dbReference type="RefSeq" id="NP_082886.2">
    <property type="nucleotide sequence ID" value="NM_028610.2"/>
</dbReference>
<dbReference type="BioGRID" id="216194">
    <property type="interactions" value="1"/>
</dbReference>
<dbReference type="FunCoup" id="Q8CCG4">
    <property type="interactions" value="502"/>
</dbReference>
<dbReference type="STRING" id="10090.ENSMUSP00000093749"/>
<dbReference type="GlyGen" id="Q8CCG4">
    <property type="glycosylation" value="1 site, 1 O-linked glycan (1 site)"/>
</dbReference>
<dbReference type="iPTMnet" id="Q8CCG4"/>
<dbReference type="PhosphoSitePlus" id="Q8CCG4"/>
<dbReference type="PaxDb" id="10090-ENSMUSP00000093749"/>
<dbReference type="PeptideAtlas" id="Q8CCG4"/>
<dbReference type="ProteomicsDB" id="277604"/>
<dbReference type="Antibodypedia" id="32419">
    <property type="antibodies" value="339 antibodies from 31 providers"/>
</dbReference>
<dbReference type="DNASU" id="73693"/>
<dbReference type="Ensembl" id="ENSMUST00000096045.9">
    <property type="protein sequence ID" value="ENSMUSP00000093749.2"/>
    <property type="gene ID" value="ENSMUSG00000058550.16"/>
</dbReference>
<dbReference type="GeneID" id="73693"/>
<dbReference type="KEGG" id="mmu:73693"/>
<dbReference type="UCSC" id="uc007zjl.1">
    <property type="organism name" value="mouse"/>
</dbReference>
<dbReference type="AGR" id="MGI:2157525"/>
<dbReference type="CTD" id="55211"/>
<dbReference type="MGI" id="MGI:2157525">
    <property type="gene designation" value="Dppa4"/>
</dbReference>
<dbReference type="VEuPathDB" id="HostDB:ENSMUSG00000058550"/>
<dbReference type="eggNOG" id="ENOG502R0CF">
    <property type="taxonomic scope" value="Eukaryota"/>
</dbReference>
<dbReference type="GeneTree" id="ENSGT00390000004871"/>
<dbReference type="HOGENOM" id="CLU_080062_0_0_1"/>
<dbReference type="InParanoid" id="Q8CCG4"/>
<dbReference type="OMA" id="WVPEKPG"/>
<dbReference type="OrthoDB" id="9831002at2759"/>
<dbReference type="PhylomeDB" id="Q8CCG4"/>
<dbReference type="TreeFam" id="TF338129"/>
<dbReference type="BioGRID-ORCS" id="73693">
    <property type="hits" value="2 hits in 78 CRISPR screens"/>
</dbReference>
<dbReference type="ChiTaRS" id="Dppa4">
    <property type="organism name" value="mouse"/>
</dbReference>
<dbReference type="PRO" id="PR:Q8CCG4"/>
<dbReference type="Proteomes" id="UP000000589">
    <property type="component" value="Chromosome 16"/>
</dbReference>
<dbReference type="RNAct" id="Q8CCG4">
    <property type="molecule type" value="protein"/>
</dbReference>
<dbReference type="Bgee" id="ENSMUSG00000058550">
    <property type="expression patterns" value="Expressed in cleaving embryo and 44 other cell types or tissues"/>
</dbReference>
<dbReference type="ExpressionAtlas" id="Q8CCG4">
    <property type="expression patterns" value="baseline and differential"/>
</dbReference>
<dbReference type="GO" id="GO:0005654">
    <property type="term" value="C:nucleoplasm"/>
    <property type="evidence" value="ECO:0000304"/>
    <property type="project" value="Reactome"/>
</dbReference>
<dbReference type="GO" id="GO:0005634">
    <property type="term" value="C:nucleus"/>
    <property type="evidence" value="ECO:0000314"/>
    <property type="project" value="MGI"/>
</dbReference>
<dbReference type="GO" id="GO:0003682">
    <property type="term" value="F:chromatin binding"/>
    <property type="evidence" value="ECO:0007669"/>
    <property type="project" value="InterPro"/>
</dbReference>
<dbReference type="GO" id="GO:0060484">
    <property type="term" value="P:lung-associated mesenchyme development"/>
    <property type="evidence" value="ECO:0000315"/>
    <property type="project" value="MGI"/>
</dbReference>
<dbReference type="InterPro" id="IPR039590">
    <property type="entry name" value="Dppa2/4"/>
</dbReference>
<dbReference type="InterPro" id="IPR025891">
    <property type="entry name" value="Dppa2/4_C_dom"/>
</dbReference>
<dbReference type="PANTHER" id="PTHR16073">
    <property type="entry name" value="DCR DOMAIN-CONTAINING PROTEIN"/>
    <property type="match status" value="1"/>
</dbReference>
<dbReference type="PANTHER" id="PTHR16073:SF8">
    <property type="entry name" value="DEVELOPMENTAL PLURIPOTENCY-ASSOCIATED PROTEIN 4"/>
    <property type="match status" value="1"/>
</dbReference>
<dbReference type="Pfam" id="PF14047">
    <property type="entry name" value="DCR"/>
    <property type="match status" value="1"/>
</dbReference>
<accession>Q8CCG4</accession>
<accession>Q6P228</accession>
<accession>Q810Y6</accession>
<reference key="1">
    <citation type="journal article" date="2003" name="Development">
        <title>Incomplete reactivation of Oct4-related genes in mouse embryos cloned from somatic nuclei.</title>
        <authorList>
            <person name="Bortvin A."/>
            <person name="Eggan K."/>
            <person name="Skaletsky H."/>
            <person name="Akutsu H."/>
            <person name="Berry D.L."/>
            <person name="Yanagimachi R."/>
            <person name="Page D.C."/>
            <person name="Jaenisch R."/>
        </authorList>
    </citation>
    <scope>NUCLEOTIDE SEQUENCE [MRNA]</scope>
    <scope>DEVELOPMENTAL STAGE</scope>
    <scope>TISSUE SPECIFICITY</scope>
</reference>
<reference key="2">
    <citation type="journal article" date="2005" name="Science">
        <title>The transcriptional landscape of the mammalian genome.</title>
        <authorList>
            <person name="Carninci P."/>
            <person name="Kasukawa T."/>
            <person name="Katayama S."/>
            <person name="Gough J."/>
            <person name="Frith M.C."/>
            <person name="Maeda N."/>
            <person name="Oyama R."/>
            <person name="Ravasi T."/>
            <person name="Lenhard B."/>
            <person name="Wells C."/>
            <person name="Kodzius R."/>
            <person name="Shimokawa K."/>
            <person name="Bajic V.B."/>
            <person name="Brenner S.E."/>
            <person name="Batalov S."/>
            <person name="Forrest A.R."/>
            <person name="Zavolan M."/>
            <person name="Davis M.J."/>
            <person name="Wilming L.G."/>
            <person name="Aidinis V."/>
            <person name="Allen J.E."/>
            <person name="Ambesi-Impiombato A."/>
            <person name="Apweiler R."/>
            <person name="Aturaliya R.N."/>
            <person name="Bailey T.L."/>
            <person name="Bansal M."/>
            <person name="Baxter L."/>
            <person name="Beisel K.W."/>
            <person name="Bersano T."/>
            <person name="Bono H."/>
            <person name="Chalk A.M."/>
            <person name="Chiu K.P."/>
            <person name="Choudhary V."/>
            <person name="Christoffels A."/>
            <person name="Clutterbuck D.R."/>
            <person name="Crowe M.L."/>
            <person name="Dalla E."/>
            <person name="Dalrymple B.P."/>
            <person name="de Bono B."/>
            <person name="Della Gatta G."/>
            <person name="di Bernardo D."/>
            <person name="Down T."/>
            <person name="Engstrom P."/>
            <person name="Fagiolini M."/>
            <person name="Faulkner G."/>
            <person name="Fletcher C.F."/>
            <person name="Fukushima T."/>
            <person name="Furuno M."/>
            <person name="Futaki S."/>
            <person name="Gariboldi M."/>
            <person name="Georgii-Hemming P."/>
            <person name="Gingeras T.R."/>
            <person name="Gojobori T."/>
            <person name="Green R.E."/>
            <person name="Gustincich S."/>
            <person name="Harbers M."/>
            <person name="Hayashi Y."/>
            <person name="Hensch T.K."/>
            <person name="Hirokawa N."/>
            <person name="Hill D."/>
            <person name="Huminiecki L."/>
            <person name="Iacono M."/>
            <person name="Ikeo K."/>
            <person name="Iwama A."/>
            <person name="Ishikawa T."/>
            <person name="Jakt M."/>
            <person name="Kanapin A."/>
            <person name="Katoh M."/>
            <person name="Kawasawa Y."/>
            <person name="Kelso J."/>
            <person name="Kitamura H."/>
            <person name="Kitano H."/>
            <person name="Kollias G."/>
            <person name="Krishnan S.P."/>
            <person name="Kruger A."/>
            <person name="Kummerfeld S.K."/>
            <person name="Kurochkin I.V."/>
            <person name="Lareau L.F."/>
            <person name="Lazarevic D."/>
            <person name="Lipovich L."/>
            <person name="Liu J."/>
            <person name="Liuni S."/>
            <person name="McWilliam S."/>
            <person name="Madan Babu M."/>
            <person name="Madera M."/>
            <person name="Marchionni L."/>
            <person name="Matsuda H."/>
            <person name="Matsuzawa S."/>
            <person name="Miki H."/>
            <person name="Mignone F."/>
            <person name="Miyake S."/>
            <person name="Morris K."/>
            <person name="Mottagui-Tabar S."/>
            <person name="Mulder N."/>
            <person name="Nakano N."/>
            <person name="Nakauchi H."/>
            <person name="Ng P."/>
            <person name="Nilsson R."/>
            <person name="Nishiguchi S."/>
            <person name="Nishikawa S."/>
            <person name="Nori F."/>
            <person name="Ohara O."/>
            <person name="Okazaki Y."/>
            <person name="Orlando V."/>
            <person name="Pang K.C."/>
            <person name="Pavan W.J."/>
            <person name="Pavesi G."/>
            <person name="Pesole G."/>
            <person name="Petrovsky N."/>
            <person name="Piazza S."/>
            <person name="Reed J."/>
            <person name="Reid J.F."/>
            <person name="Ring B.Z."/>
            <person name="Ringwald M."/>
            <person name="Rost B."/>
            <person name="Ruan Y."/>
            <person name="Salzberg S.L."/>
            <person name="Sandelin A."/>
            <person name="Schneider C."/>
            <person name="Schoenbach C."/>
            <person name="Sekiguchi K."/>
            <person name="Semple C.A."/>
            <person name="Seno S."/>
            <person name="Sessa L."/>
            <person name="Sheng Y."/>
            <person name="Shibata Y."/>
            <person name="Shimada H."/>
            <person name="Shimada K."/>
            <person name="Silva D."/>
            <person name="Sinclair B."/>
            <person name="Sperling S."/>
            <person name="Stupka E."/>
            <person name="Sugiura K."/>
            <person name="Sultana R."/>
            <person name="Takenaka Y."/>
            <person name="Taki K."/>
            <person name="Tammoja K."/>
            <person name="Tan S.L."/>
            <person name="Tang S."/>
            <person name="Taylor M.S."/>
            <person name="Tegner J."/>
            <person name="Teichmann S.A."/>
            <person name="Ueda H.R."/>
            <person name="van Nimwegen E."/>
            <person name="Verardo R."/>
            <person name="Wei C.L."/>
            <person name="Yagi K."/>
            <person name="Yamanishi H."/>
            <person name="Zabarovsky E."/>
            <person name="Zhu S."/>
            <person name="Zimmer A."/>
            <person name="Hide W."/>
            <person name="Bult C."/>
            <person name="Grimmond S.M."/>
            <person name="Teasdale R.D."/>
            <person name="Liu E.T."/>
            <person name="Brusic V."/>
            <person name="Quackenbush J."/>
            <person name="Wahlestedt C."/>
            <person name="Mattick J.S."/>
            <person name="Hume D.A."/>
            <person name="Kai C."/>
            <person name="Sasaki D."/>
            <person name="Tomaru Y."/>
            <person name="Fukuda S."/>
            <person name="Kanamori-Katayama M."/>
            <person name="Suzuki M."/>
            <person name="Aoki J."/>
            <person name="Arakawa T."/>
            <person name="Iida J."/>
            <person name="Imamura K."/>
            <person name="Itoh M."/>
            <person name="Kato T."/>
            <person name="Kawaji H."/>
            <person name="Kawagashira N."/>
            <person name="Kawashima T."/>
            <person name="Kojima M."/>
            <person name="Kondo S."/>
            <person name="Konno H."/>
            <person name="Nakano K."/>
            <person name="Ninomiya N."/>
            <person name="Nishio T."/>
            <person name="Okada M."/>
            <person name="Plessy C."/>
            <person name="Shibata K."/>
            <person name="Shiraki T."/>
            <person name="Suzuki S."/>
            <person name="Tagami M."/>
            <person name="Waki K."/>
            <person name="Watahiki A."/>
            <person name="Okamura-Oho Y."/>
            <person name="Suzuki H."/>
            <person name="Kawai J."/>
            <person name="Hayashizaki Y."/>
        </authorList>
    </citation>
    <scope>NUCLEOTIDE SEQUENCE [LARGE SCALE MRNA]</scope>
    <source>
        <strain>C57BL/6J</strain>
        <tissue>Testis</tissue>
    </source>
</reference>
<reference key="3">
    <citation type="journal article" date="2004" name="Genome Res.">
        <title>The status, quality, and expansion of the NIH full-length cDNA project: the Mammalian Gene Collection (MGC).</title>
        <authorList>
            <consortium name="The MGC Project Team"/>
        </authorList>
    </citation>
    <scope>NUCLEOTIDE SEQUENCE [LARGE SCALE MRNA]</scope>
    <source>
        <strain>B5/EGFP</strain>
        <tissue>Trophoblast stem cell</tissue>
    </source>
</reference>
<reference key="4">
    <citation type="journal article" date="2007" name="J. Biol. Chem.">
        <title>Developmental pluripotency-associated 4 (DPPA4) localized in active chromatin inhibits mouse embryonic stem cell differentiation into a primitive ectoderm lineage.</title>
        <authorList>
            <person name="Masaki H."/>
            <person name="Nishida T."/>
            <person name="Kitajima S."/>
            <person name="Asahina K."/>
            <person name="Teraoka H."/>
        </authorList>
    </citation>
    <scope>FUNCTION</scope>
    <scope>SUBCELLULAR LOCATION</scope>
    <scope>TISSUE SPECIFICITY</scope>
    <scope>DEVELOPMENTAL STAGE</scope>
</reference>
<reference key="5">
    <citation type="journal article" date="2011" name="Mol. Cell. Biol.">
        <title>Essential roles of ECAT15-2/Dppa2 in functional lung development.</title>
        <authorList>
            <person name="Nakamura T."/>
            <person name="Nakagawa M."/>
            <person name="Ichisaka T."/>
            <person name="Shiota A."/>
            <person name="Yamanaka S."/>
        </authorList>
    </citation>
    <scope>FUNCTION</scope>
    <scope>INTERACTION WITH DPPA2</scope>
    <scope>SUBCELLULAR LOCATION</scope>
    <scope>TISSUE SPECIFICITY</scope>
    <scope>DEVELOPMENTAL STAGE</scope>
    <scope>DISRUPTION PHENOTYPE</scope>
</reference>
<sequence>METAGDKKWSAEEPKEEVELQMSSQPSTAPAKAKATGKKQKKSETDNGCKPKEGKPQDTETPGQTRRKVPIPPIPEYLPPVNLIHRDVLRAWCQKKRVSSKGQKLDAYKRLLARAFPEQMLELRNVPDSAKDARLKTAHKKMKTEPGEESEVTVPLEMVPVPEEQIPALIDPPMLYEEVSTTVVTTPATEAVLASWARIASNAKKYEAVPADASSSSEVKGEMWCVVHGTSLPGNSRGWVRLQFHAGQAWVPDKKGKAIALFLLPACTFPPPHLEDNMLCPKCVHKNKILTKSLEG</sequence>
<keyword id="KW-0217">Developmental protein</keyword>
<keyword id="KW-0539">Nucleus</keyword>
<keyword id="KW-1185">Reference proteome</keyword>
<keyword id="KW-0804">Transcription</keyword>
<keyword id="KW-0805">Transcription regulation</keyword>
<name>DPPA4_MOUSE</name>